<protein>
    <recommendedName>
        <fullName evidence="1">Undecaprenyl-diphosphatase</fullName>
        <ecNumber evidence="1">3.6.1.27</ecNumber>
    </recommendedName>
    <alternativeName>
        <fullName evidence="1">Bacitracin resistance protein</fullName>
    </alternativeName>
    <alternativeName>
        <fullName evidence="1">Undecaprenyl pyrophosphate phosphatase</fullName>
    </alternativeName>
</protein>
<sequence>MSDMHSLLIAAILGVVEGLTEFLPVSSTGHMIIVGHLLGFEGDTAKTFEVVIQLGSILAVVVMFWRRLFGLIGIHFGRPLQREGESKGRLTLIHILLGMIPAVVLGLVFHDTIKSLFNPINVMYALVVGGLLLIAAECLKPKEPRAPGLDDMTYRQAFMIGCFQCLALWPGFSRSGATISGGMLMGVSRYAASEFSFLLAVPMMMGATVLDLYKSWSFLTAADIPMFAVGFVTAFVVALIAIKTFLQLIKRISFIPFAIYRFVVAAAVYVVFF</sequence>
<evidence type="ECO:0000255" key="1">
    <source>
        <dbReference type="HAMAP-Rule" id="MF_01006"/>
    </source>
</evidence>
<name>UPPP_SALA4</name>
<keyword id="KW-0046">Antibiotic resistance</keyword>
<keyword id="KW-0997">Cell inner membrane</keyword>
<keyword id="KW-1003">Cell membrane</keyword>
<keyword id="KW-0133">Cell shape</keyword>
<keyword id="KW-0961">Cell wall biogenesis/degradation</keyword>
<keyword id="KW-0378">Hydrolase</keyword>
<keyword id="KW-0472">Membrane</keyword>
<keyword id="KW-0573">Peptidoglycan synthesis</keyword>
<keyword id="KW-0812">Transmembrane</keyword>
<keyword id="KW-1133">Transmembrane helix</keyword>
<gene>
    <name evidence="1" type="primary">uppP</name>
    <name type="ordered locus">SeAg_B3391</name>
</gene>
<organism>
    <name type="scientific">Salmonella agona (strain SL483)</name>
    <dbReference type="NCBI Taxonomy" id="454166"/>
    <lineage>
        <taxon>Bacteria</taxon>
        <taxon>Pseudomonadati</taxon>
        <taxon>Pseudomonadota</taxon>
        <taxon>Gammaproteobacteria</taxon>
        <taxon>Enterobacterales</taxon>
        <taxon>Enterobacteriaceae</taxon>
        <taxon>Salmonella</taxon>
    </lineage>
</organism>
<feature type="chain" id="PRO_1000197398" description="Undecaprenyl-diphosphatase">
    <location>
        <begin position="1"/>
        <end position="273"/>
    </location>
</feature>
<feature type="transmembrane region" description="Helical" evidence="1">
    <location>
        <begin position="6"/>
        <end position="26"/>
    </location>
</feature>
<feature type="transmembrane region" description="Helical" evidence="1">
    <location>
        <begin position="45"/>
        <end position="65"/>
    </location>
</feature>
<feature type="transmembrane region" description="Helical" evidence="1">
    <location>
        <begin position="90"/>
        <end position="110"/>
    </location>
</feature>
<feature type="transmembrane region" description="Helical" evidence="1">
    <location>
        <begin position="116"/>
        <end position="136"/>
    </location>
</feature>
<feature type="transmembrane region" description="Helical" evidence="1">
    <location>
        <begin position="190"/>
        <end position="210"/>
    </location>
</feature>
<feature type="transmembrane region" description="Helical" evidence="1">
    <location>
        <begin position="222"/>
        <end position="242"/>
    </location>
</feature>
<feature type="transmembrane region" description="Helical" evidence="1">
    <location>
        <begin position="252"/>
        <end position="272"/>
    </location>
</feature>
<reference key="1">
    <citation type="journal article" date="2011" name="J. Bacteriol.">
        <title>Comparative genomics of 28 Salmonella enterica isolates: evidence for CRISPR-mediated adaptive sublineage evolution.</title>
        <authorList>
            <person name="Fricke W.F."/>
            <person name="Mammel M.K."/>
            <person name="McDermott P.F."/>
            <person name="Tartera C."/>
            <person name="White D.G."/>
            <person name="Leclerc J.E."/>
            <person name="Ravel J."/>
            <person name="Cebula T.A."/>
        </authorList>
    </citation>
    <scope>NUCLEOTIDE SEQUENCE [LARGE SCALE GENOMIC DNA]</scope>
    <source>
        <strain>SL483</strain>
    </source>
</reference>
<comment type="function">
    <text evidence="1">Catalyzes the dephosphorylation of undecaprenyl diphosphate (UPP). Confers resistance to bacitracin.</text>
</comment>
<comment type="catalytic activity">
    <reaction evidence="1">
        <text>di-trans,octa-cis-undecaprenyl diphosphate + H2O = di-trans,octa-cis-undecaprenyl phosphate + phosphate + H(+)</text>
        <dbReference type="Rhea" id="RHEA:28094"/>
        <dbReference type="ChEBI" id="CHEBI:15377"/>
        <dbReference type="ChEBI" id="CHEBI:15378"/>
        <dbReference type="ChEBI" id="CHEBI:43474"/>
        <dbReference type="ChEBI" id="CHEBI:58405"/>
        <dbReference type="ChEBI" id="CHEBI:60392"/>
        <dbReference type="EC" id="3.6.1.27"/>
    </reaction>
</comment>
<comment type="subcellular location">
    <subcellularLocation>
        <location evidence="1">Cell inner membrane</location>
        <topology evidence="1">Multi-pass membrane protein</topology>
    </subcellularLocation>
</comment>
<comment type="miscellaneous">
    <text>Bacitracin is thought to be involved in the inhibition of peptidoglycan synthesis by sequestering undecaprenyl diphosphate, thereby reducing the pool of lipid carrier available.</text>
</comment>
<comment type="similarity">
    <text evidence="1">Belongs to the UppP family.</text>
</comment>
<dbReference type="EC" id="3.6.1.27" evidence="1"/>
<dbReference type="EMBL" id="CP001138">
    <property type="protein sequence ID" value="ACH51708.1"/>
    <property type="molecule type" value="Genomic_DNA"/>
</dbReference>
<dbReference type="SMR" id="B5F6A1"/>
<dbReference type="KEGG" id="sea:SeAg_B3391"/>
<dbReference type="HOGENOM" id="CLU_060296_2_0_6"/>
<dbReference type="Proteomes" id="UP000008819">
    <property type="component" value="Chromosome"/>
</dbReference>
<dbReference type="GO" id="GO:0005886">
    <property type="term" value="C:plasma membrane"/>
    <property type="evidence" value="ECO:0007669"/>
    <property type="project" value="UniProtKB-SubCell"/>
</dbReference>
<dbReference type="GO" id="GO:0050380">
    <property type="term" value="F:undecaprenyl-diphosphatase activity"/>
    <property type="evidence" value="ECO:0007669"/>
    <property type="project" value="UniProtKB-UniRule"/>
</dbReference>
<dbReference type="GO" id="GO:0071555">
    <property type="term" value="P:cell wall organization"/>
    <property type="evidence" value="ECO:0007669"/>
    <property type="project" value="UniProtKB-KW"/>
</dbReference>
<dbReference type="GO" id="GO:0009252">
    <property type="term" value="P:peptidoglycan biosynthetic process"/>
    <property type="evidence" value="ECO:0007669"/>
    <property type="project" value="UniProtKB-KW"/>
</dbReference>
<dbReference type="GO" id="GO:0008360">
    <property type="term" value="P:regulation of cell shape"/>
    <property type="evidence" value="ECO:0007669"/>
    <property type="project" value="UniProtKB-KW"/>
</dbReference>
<dbReference type="GO" id="GO:0046677">
    <property type="term" value="P:response to antibiotic"/>
    <property type="evidence" value="ECO:0007669"/>
    <property type="project" value="UniProtKB-UniRule"/>
</dbReference>
<dbReference type="HAMAP" id="MF_01006">
    <property type="entry name" value="Undec_diphosphatase"/>
    <property type="match status" value="1"/>
</dbReference>
<dbReference type="InterPro" id="IPR003824">
    <property type="entry name" value="UppP"/>
</dbReference>
<dbReference type="NCBIfam" id="NF001388">
    <property type="entry name" value="PRK00281.1-1"/>
    <property type="match status" value="1"/>
</dbReference>
<dbReference type="NCBIfam" id="NF001389">
    <property type="entry name" value="PRK00281.1-2"/>
    <property type="match status" value="1"/>
</dbReference>
<dbReference type="NCBIfam" id="NF001390">
    <property type="entry name" value="PRK00281.1-4"/>
    <property type="match status" value="1"/>
</dbReference>
<dbReference type="NCBIfam" id="TIGR00753">
    <property type="entry name" value="undec_PP_bacA"/>
    <property type="match status" value="1"/>
</dbReference>
<dbReference type="PANTHER" id="PTHR30622">
    <property type="entry name" value="UNDECAPRENYL-DIPHOSPHATASE"/>
    <property type="match status" value="1"/>
</dbReference>
<dbReference type="PANTHER" id="PTHR30622:SF3">
    <property type="entry name" value="UNDECAPRENYL-DIPHOSPHATASE"/>
    <property type="match status" value="1"/>
</dbReference>
<dbReference type="Pfam" id="PF02673">
    <property type="entry name" value="BacA"/>
    <property type="match status" value="1"/>
</dbReference>
<proteinExistence type="inferred from homology"/>
<accession>B5F6A1</accession>